<evidence type="ECO:0000250" key="1"/>
<evidence type="ECO:0000255" key="2"/>
<evidence type="ECO:0000255" key="3">
    <source>
        <dbReference type="PROSITE-ProRule" id="PRU00114"/>
    </source>
</evidence>
<evidence type="ECO:0000256" key="4">
    <source>
        <dbReference type="SAM" id="MobiDB-lite"/>
    </source>
</evidence>
<evidence type="ECO:0000303" key="5">
    <source>
    </source>
</evidence>
<evidence type="ECO:0000305" key="6"/>
<reference key="1">
    <citation type="journal article" date="1988" name="EMBO J.">
        <title>A molecular map of the chicken major histocompatibility complex: the class II beta genes are closely linked to the class I genes and the nucleolar organizer.</title>
        <authorList>
            <person name="Guillemot F."/>
            <person name="Billault A."/>
            <person name="Pourquie O."/>
            <person name="Behar G."/>
            <person name="Chausse A.M."/>
            <person name="Zoorob R."/>
            <person name="Kreibich G."/>
            <person name="Auffray C."/>
        </authorList>
    </citation>
    <scope>NUCLEOTIDE SEQUENCE (ISOFORM LONG)</scope>
</reference>
<reference key="2">
    <citation type="submission" date="1998-05" db="EMBL/GenBank/DDBJ databases">
        <authorList>
            <person name="Milne S."/>
            <person name="Kaufman J."/>
            <person name="Beck S."/>
        </authorList>
    </citation>
    <scope>NUCLEOTIDE SEQUENCE (ISOFORM LONG)</scope>
</reference>
<reference key="3">
    <citation type="journal article" date="1999" name="Immunogenetics">
        <title>Identification of the Tapasin gene in the chicken major histocompatibility complex.</title>
        <authorList>
            <person name="Frangoulis B."/>
            <person name="Park I."/>
            <person name="Guillemot F."/>
            <person name="Severac V."/>
            <person name="Auffray C."/>
            <person name="Zoorob R."/>
        </authorList>
    </citation>
    <scope>NUCLEOTIDE SEQUENCE [GENOMIC DNA / MRNA] (ISOFORMS LONG AND SHORT)</scope>
</reference>
<accession>O73895</accession>
<accession>O73886</accession>
<accession>O73887</accession>
<accession>O93604</accession>
<dbReference type="EMBL" id="AL023516">
    <property type="protein sequence ID" value="CAA18963.1"/>
    <property type="molecule type" value="Genomic_DNA"/>
</dbReference>
<dbReference type="EMBL" id="AJ004999">
    <property type="protein sequence ID" value="CAA06273.1"/>
    <property type="molecule type" value="Genomic_DNA"/>
</dbReference>
<dbReference type="EMBL" id="AJ005071">
    <property type="protein sequence ID" value="CAA06327.1"/>
    <property type="molecule type" value="mRNA"/>
</dbReference>
<dbReference type="EMBL" id="AJ005072">
    <property type="protein sequence ID" value="CAA06328.1"/>
    <property type="molecule type" value="mRNA"/>
</dbReference>
<dbReference type="PIR" id="T28143">
    <property type="entry name" value="T28143"/>
</dbReference>
<dbReference type="SMR" id="O73895"/>
<dbReference type="FunCoup" id="O73895">
    <property type="interactions" value="90"/>
</dbReference>
<dbReference type="STRING" id="9031.ENSGALP00000000202"/>
<dbReference type="GlyCosmos" id="O73895">
    <property type="glycosylation" value="1 site, No reported glycans"/>
</dbReference>
<dbReference type="GlyGen" id="O73895">
    <property type="glycosylation" value="1 site"/>
</dbReference>
<dbReference type="PaxDb" id="9031-ENSGALP00000000202"/>
<dbReference type="VEuPathDB" id="HostDB:geneid_417048"/>
<dbReference type="eggNOG" id="ENOG502QSXA">
    <property type="taxonomic scope" value="Eukaryota"/>
</dbReference>
<dbReference type="InParanoid" id="O73895"/>
<dbReference type="OrthoDB" id="8929156at2759"/>
<dbReference type="PhylomeDB" id="O73895"/>
<dbReference type="PRO" id="PR:O73895"/>
<dbReference type="Proteomes" id="UP000000539">
    <property type="component" value="Unassembled WGS sequence"/>
</dbReference>
<dbReference type="GO" id="GO:0042824">
    <property type="term" value="C:MHC class I peptide loading complex"/>
    <property type="evidence" value="ECO:0000318"/>
    <property type="project" value="GO_Central"/>
</dbReference>
<dbReference type="GO" id="GO:0023024">
    <property type="term" value="F:MHC class I protein complex binding"/>
    <property type="evidence" value="ECO:0000318"/>
    <property type="project" value="GO_Central"/>
</dbReference>
<dbReference type="GO" id="GO:0062061">
    <property type="term" value="F:TAP complex binding"/>
    <property type="evidence" value="ECO:0000318"/>
    <property type="project" value="GO_Central"/>
</dbReference>
<dbReference type="GO" id="GO:0002502">
    <property type="term" value="P:peptide antigen assembly with MHC class I protein complex"/>
    <property type="evidence" value="ECO:0000318"/>
    <property type="project" value="GO_Central"/>
</dbReference>
<dbReference type="CDD" id="cd05771">
    <property type="entry name" value="IgC1_Tapasin_R"/>
    <property type="match status" value="1"/>
</dbReference>
<dbReference type="Gene3D" id="2.60.40.10">
    <property type="entry name" value="Immunoglobulins"/>
    <property type="match status" value="3"/>
</dbReference>
<dbReference type="InterPro" id="IPR007110">
    <property type="entry name" value="Ig-like_dom"/>
</dbReference>
<dbReference type="InterPro" id="IPR036179">
    <property type="entry name" value="Ig-like_dom_sf"/>
</dbReference>
<dbReference type="InterPro" id="IPR013783">
    <property type="entry name" value="Ig-like_fold"/>
</dbReference>
<dbReference type="InterPro" id="IPR003006">
    <property type="entry name" value="Ig/MHC_CS"/>
</dbReference>
<dbReference type="InterPro" id="IPR003597">
    <property type="entry name" value="Ig_C1-set"/>
</dbReference>
<dbReference type="InterPro" id="IPR003599">
    <property type="entry name" value="Ig_sub"/>
</dbReference>
<dbReference type="InterPro" id="IPR013106">
    <property type="entry name" value="Ig_V-set"/>
</dbReference>
<dbReference type="InterPro" id="IPR050380">
    <property type="entry name" value="Immune_Resp_Modulators"/>
</dbReference>
<dbReference type="PANTHER" id="PTHR23411">
    <property type="entry name" value="TAPASIN"/>
    <property type="match status" value="1"/>
</dbReference>
<dbReference type="Pfam" id="PF07654">
    <property type="entry name" value="C1-set"/>
    <property type="match status" value="1"/>
</dbReference>
<dbReference type="Pfam" id="PF07686">
    <property type="entry name" value="V-set"/>
    <property type="match status" value="1"/>
</dbReference>
<dbReference type="SMART" id="SM00409">
    <property type="entry name" value="IG"/>
    <property type="match status" value="2"/>
</dbReference>
<dbReference type="SMART" id="SM00407">
    <property type="entry name" value="IGc1"/>
    <property type="match status" value="1"/>
</dbReference>
<dbReference type="SUPFAM" id="SSF48726">
    <property type="entry name" value="Immunoglobulin"/>
    <property type="match status" value="2"/>
</dbReference>
<dbReference type="PROSITE" id="PS50835">
    <property type="entry name" value="IG_LIKE"/>
    <property type="match status" value="2"/>
</dbReference>
<dbReference type="PROSITE" id="PS00290">
    <property type="entry name" value="IG_MHC"/>
    <property type="match status" value="1"/>
</dbReference>
<protein>
    <recommendedName>
        <fullName>Tapasin</fullName>
        <shortName>TPN</shortName>
        <shortName>TPSN</shortName>
    </recommendedName>
    <alternativeName>
        <fullName>TAP-associated protein</fullName>
    </alternativeName>
    <alternativeName>
        <fullName>TAP-binding protein</fullName>
    </alternativeName>
</protein>
<gene>
    <name type="primary">TAPBP</name>
    <name type="synonym">B-TAPBPL</name>
</gene>
<feature type="signal peptide" evidence="2">
    <location>
        <begin position="1"/>
        <end position="15"/>
    </location>
</feature>
<feature type="chain" id="PRO_0000014992" description="Tapasin">
    <location>
        <begin position="16"/>
        <end position="430"/>
    </location>
</feature>
<feature type="topological domain" description="Lumenal" evidence="2">
    <location>
        <begin position="16"/>
        <end position="399"/>
    </location>
</feature>
<feature type="transmembrane region" description="Helical" evidence="2">
    <location>
        <begin position="400"/>
        <end position="417"/>
    </location>
</feature>
<feature type="topological domain" description="Cytoplasmic" evidence="2">
    <location>
        <begin position="418"/>
        <end position="430"/>
    </location>
</feature>
<feature type="domain" description="Ig-like C1-type 1">
    <location>
        <begin position="139"/>
        <end position="273"/>
    </location>
</feature>
<feature type="domain" description="Ig-like C1-type 2">
    <location>
        <begin position="278"/>
        <end position="382"/>
    </location>
</feature>
<feature type="region of interest" description="Disordered" evidence="4">
    <location>
        <begin position="61"/>
        <end position="128"/>
    </location>
</feature>
<feature type="region of interest" description="Disordered" evidence="4">
    <location>
        <begin position="316"/>
        <end position="342"/>
    </location>
</feature>
<feature type="compositionally biased region" description="Polar residues" evidence="4">
    <location>
        <begin position="101"/>
        <end position="111"/>
    </location>
</feature>
<feature type="compositionally biased region" description="Polar residues" evidence="4">
    <location>
        <begin position="322"/>
        <end position="338"/>
    </location>
</feature>
<feature type="site" description="May be involved in interaction with TAP">
    <location>
        <position position="413"/>
    </location>
</feature>
<feature type="glycosylation site" description="N-linked (GlcNAc...) asparagine" evidence="2">
    <location>
        <position position="78"/>
    </location>
</feature>
<feature type="disulfide bond" evidence="3">
    <location>
        <begin position="34"/>
        <end position="99"/>
    </location>
</feature>
<feature type="disulfide bond" evidence="3">
    <location>
        <begin position="299"/>
        <end position="368"/>
    </location>
</feature>
<feature type="splice variant" id="VSP_002579" description="In isoform Short." evidence="5">
    <location>
        <begin position="161"/>
        <end position="275"/>
    </location>
</feature>
<feature type="sequence conflict" description="In Ref. 1 and 2." evidence="6" ref="1 2">
    <original>H</original>
    <variation>T</variation>
    <location>
        <position position="222"/>
    </location>
</feature>
<name>TPSN_CHICK</name>
<comment type="function">
    <text evidence="1">Involved in the association of MHC class I with transporter associated with antigen processing (TAP) and in the assembly of MHC class I with peptide (peptide loading).</text>
</comment>
<comment type="subunit">
    <text evidence="1">Interacts with TAP1 and is thus a subunit of the TAP complex. Interaction with TAP1 is TAP2 independent and is required for efficient peptide-TAP interaction. Obligatory mediator for the interaction between newly assembled MHC class I molecules, calreticulin, ERp57 and TAP. Up to 4 MHC class I/tapasin complexes bind to 1 TAP (By similarity).</text>
</comment>
<comment type="subcellular location">
    <subcellularLocation>
        <location evidence="6">Endoplasmic reticulum membrane</location>
        <topology evidence="6">Single-pass type I membrane protein</topology>
    </subcellularLocation>
</comment>
<comment type="alternative products">
    <event type="alternative splicing"/>
    <isoform>
        <id>O73895-1</id>
        <name>Long</name>
        <sequence type="displayed"/>
    </isoform>
    <isoform>
        <id>O73895-2</id>
        <name>Short</name>
        <sequence type="described" ref="VSP_002579"/>
    </isoform>
</comment>
<comment type="domain">
    <text evidence="1">The N-terminus is required for efficient association with MHC class I molecule and for a stable interaction between MHC I and calreticulin. Binding to TAP is mediated by the C-terminal region (By similarity).</text>
</comment>
<proteinExistence type="evidence at transcript level"/>
<organism>
    <name type="scientific">Gallus gallus</name>
    <name type="common">Chicken</name>
    <dbReference type="NCBI Taxonomy" id="9031"/>
    <lineage>
        <taxon>Eukaryota</taxon>
        <taxon>Metazoa</taxon>
        <taxon>Chordata</taxon>
        <taxon>Craniata</taxon>
        <taxon>Vertebrata</taxon>
        <taxon>Euteleostomi</taxon>
        <taxon>Archelosauria</taxon>
        <taxon>Archosauria</taxon>
        <taxon>Dinosauria</taxon>
        <taxon>Saurischia</taxon>
        <taxon>Theropoda</taxon>
        <taxon>Coelurosauria</taxon>
        <taxon>Aves</taxon>
        <taxon>Neognathae</taxon>
        <taxon>Galloanserae</taxon>
        <taxon>Galliformes</taxon>
        <taxon>Phasianidae</taxon>
        <taxon>Phasianinae</taxon>
        <taxon>Gallus</taxon>
    </lineage>
</organism>
<sequence length="430" mass="45456">MAAGLRLLLAGLCWSQFRVEDAASPPPPPAPVRCALLEGVGRGGGLPGGGNARPALLRFGGDAETPPEPGPEPEVTFNVSDPWGTLTPLGVPPRTPPSCELNPTNPQTGSDPWSRPLHPDARSPPTAGGQWWVAAVGTPQYGVTALLQGGMGTEGTITAAVALAVLTHTPTLRARVGSPIHLHCAFAAPPSSFVLEWRHQNRGAGRVLLAYDSSTARAPRAHPGAELLLGTRDGDGVTAVTLRLARPSPGDEGTYICSVFLPHGHTQTVLQLHVFEPPKVTLSPKNLVVAPGTSAELRCHVSGFYPLDVTVTWQRRAGGSGTSQSPRDTVMDSWTSGHRQAADGTYSRTAAARLIPARPQHHGDIYSCVVTHTALAKPMRVSVRLLLAGTEGPHLEDITGLFLVAFVLCGLIRWLYPKAARPKEETKKSQ</sequence>
<keyword id="KW-0025">Alternative splicing</keyword>
<keyword id="KW-1015">Disulfide bond</keyword>
<keyword id="KW-0256">Endoplasmic reticulum</keyword>
<keyword id="KW-0325">Glycoprotein</keyword>
<keyword id="KW-0393">Immunoglobulin domain</keyword>
<keyword id="KW-0472">Membrane</keyword>
<keyword id="KW-1185">Reference proteome</keyword>
<keyword id="KW-0677">Repeat</keyword>
<keyword id="KW-0732">Signal</keyword>
<keyword id="KW-0812">Transmembrane</keyword>
<keyword id="KW-1133">Transmembrane helix</keyword>